<name>CLPX_EHRCJ</name>
<organism>
    <name type="scientific">Ehrlichia canis (strain Jake)</name>
    <dbReference type="NCBI Taxonomy" id="269484"/>
    <lineage>
        <taxon>Bacteria</taxon>
        <taxon>Pseudomonadati</taxon>
        <taxon>Pseudomonadota</taxon>
        <taxon>Alphaproteobacteria</taxon>
        <taxon>Rickettsiales</taxon>
        <taxon>Anaplasmataceae</taxon>
        <taxon>Ehrlichia</taxon>
    </lineage>
</organism>
<reference key="1">
    <citation type="journal article" date="2006" name="J. Bacteriol.">
        <title>The genome of the obligately intracellular bacterium Ehrlichia canis reveals themes of complex membrane structure and immune evasion strategies.</title>
        <authorList>
            <person name="Mavromatis K."/>
            <person name="Doyle C.K."/>
            <person name="Lykidis A."/>
            <person name="Ivanova N."/>
            <person name="Francino M.P."/>
            <person name="Chain P."/>
            <person name="Shin M."/>
            <person name="Malfatti S."/>
            <person name="Larimer F."/>
            <person name="Copeland A."/>
            <person name="Detter J.C."/>
            <person name="Land M."/>
            <person name="Richardson P.M."/>
            <person name="Yu X.J."/>
            <person name="Walker D.H."/>
            <person name="McBride J.W."/>
            <person name="Kyrpides N.C."/>
        </authorList>
    </citation>
    <scope>NUCLEOTIDE SEQUENCE [LARGE SCALE GENOMIC DNA]</scope>
    <source>
        <strain>Jake</strain>
    </source>
</reference>
<proteinExistence type="inferred from homology"/>
<gene>
    <name evidence="1" type="primary">clpX</name>
    <name type="ordered locus">Ecaj_0203</name>
</gene>
<protein>
    <recommendedName>
        <fullName evidence="1">ATP-dependent Clp protease ATP-binding subunit ClpX</fullName>
    </recommendedName>
</protein>
<comment type="function">
    <text evidence="1">ATP-dependent specificity component of the Clp protease. It directs the protease to specific substrates. Can perform chaperone functions in the absence of ClpP.</text>
</comment>
<comment type="subunit">
    <text evidence="1">Component of the ClpX-ClpP complex. Forms a hexameric ring that, in the presence of ATP, binds to fourteen ClpP subunits assembled into a disk-like structure with a central cavity, resembling the structure of eukaryotic proteasomes.</text>
</comment>
<comment type="similarity">
    <text evidence="1">Belongs to the ClpX chaperone family.</text>
</comment>
<evidence type="ECO:0000255" key="1">
    <source>
        <dbReference type="HAMAP-Rule" id="MF_00175"/>
    </source>
</evidence>
<evidence type="ECO:0000255" key="2">
    <source>
        <dbReference type="PROSITE-ProRule" id="PRU01250"/>
    </source>
</evidence>
<accession>Q3YSQ2</accession>
<sequence>MADSEKNSCSCSFCGKIHSEVRKLIAGPSVFICNECIDLCSGILQEEGRSYKKTDTLDLKPKEIKKVLDEYVIGQEHSKKVLSVAVYNHYKRLSNSGVISEVEISKSNVLLIGPTGSGKTLLARTLARVLQVPFAMADATTLTEAGYVGEDVENILLKLLQAANFNVDAAQRGIIYIDEVDKISRKSENTSITRDVSGEGVQQALLKVIEGTVSSVPPQGGRKHPHQEFIQINTDNILFIFGGAFDGLDKIIESRHRGSSMGFEANVQKVSKNKDIFCYTEPEDLVKFGLIPEFVGRIPVITSLSELNESTLCRILVEPKNSLVKQYKKLFEMDNIDLQFDDSALSEIAKKAAVRKTGARGLRAILEALLLDLMFESPGDVGINQVVISKKMVEELMVNSRLFLKH</sequence>
<feature type="chain" id="PRO_1000024553" description="ATP-dependent Clp protease ATP-binding subunit ClpX">
    <location>
        <begin position="1"/>
        <end position="406"/>
    </location>
</feature>
<feature type="domain" description="ClpX-type ZB" evidence="2">
    <location>
        <begin position="1"/>
        <end position="52"/>
    </location>
</feature>
<feature type="binding site" evidence="2">
    <location>
        <position position="11"/>
    </location>
    <ligand>
        <name>Zn(2+)</name>
        <dbReference type="ChEBI" id="CHEBI:29105"/>
    </ligand>
</feature>
<feature type="binding site" evidence="2">
    <location>
        <position position="14"/>
    </location>
    <ligand>
        <name>Zn(2+)</name>
        <dbReference type="ChEBI" id="CHEBI:29105"/>
    </ligand>
</feature>
<feature type="binding site" evidence="2">
    <location>
        <position position="33"/>
    </location>
    <ligand>
        <name>Zn(2+)</name>
        <dbReference type="ChEBI" id="CHEBI:29105"/>
    </ligand>
</feature>
<feature type="binding site" evidence="2">
    <location>
        <position position="36"/>
    </location>
    <ligand>
        <name>Zn(2+)</name>
        <dbReference type="ChEBI" id="CHEBI:29105"/>
    </ligand>
</feature>
<feature type="binding site" evidence="1">
    <location>
        <begin position="114"/>
        <end position="121"/>
    </location>
    <ligand>
        <name>ATP</name>
        <dbReference type="ChEBI" id="CHEBI:30616"/>
    </ligand>
</feature>
<dbReference type="EMBL" id="CP000107">
    <property type="protein sequence ID" value="AAZ68253.1"/>
    <property type="molecule type" value="Genomic_DNA"/>
</dbReference>
<dbReference type="RefSeq" id="WP_011304331.1">
    <property type="nucleotide sequence ID" value="NC_007354.1"/>
</dbReference>
<dbReference type="SMR" id="Q3YSQ2"/>
<dbReference type="FunCoup" id="Q3YSQ2">
    <property type="interactions" value="251"/>
</dbReference>
<dbReference type="STRING" id="269484.Ecaj_0203"/>
<dbReference type="KEGG" id="ecn:Ecaj_0203"/>
<dbReference type="eggNOG" id="COG1219">
    <property type="taxonomic scope" value="Bacteria"/>
</dbReference>
<dbReference type="HOGENOM" id="CLU_014218_8_2_5"/>
<dbReference type="InParanoid" id="Q3YSQ2"/>
<dbReference type="Proteomes" id="UP000000435">
    <property type="component" value="Chromosome"/>
</dbReference>
<dbReference type="GO" id="GO:0009376">
    <property type="term" value="C:HslUV protease complex"/>
    <property type="evidence" value="ECO:0007669"/>
    <property type="project" value="TreeGrafter"/>
</dbReference>
<dbReference type="GO" id="GO:0005524">
    <property type="term" value="F:ATP binding"/>
    <property type="evidence" value="ECO:0007669"/>
    <property type="project" value="UniProtKB-UniRule"/>
</dbReference>
<dbReference type="GO" id="GO:0016887">
    <property type="term" value="F:ATP hydrolysis activity"/>
    <property type="evidence" value="ECO:0007669"/>
    <property type="project" value="InterPro"/>
</dbReference>
<dbReference type="GO" id="GO:0140662">
    <property type="term" value="F:ATP-dependent protein folding chaperone"/>
    <property type="evidence" value="ECO:0007669"/>
    <property type="project" value="InterPro"/>
</dbReference>
<dbReference type="GO" id="GO:0046983">
    <property type="term" value="F:protein dimerization activity"/>
    <property type="evidence" value="ECO:0007669"/>
    <property type="project" value="InterPro"/>
</dbReference>
<dbReference type="GO" id="GO:0051082">
    <property type="term" value="F:unfolded protein binding"/>
    <property type="evidence" value="ECO:0007669"/>
    <property type="project" value="UniProtKB-UniRule"/>
</dbReference>
<dbReference type="GO" id="GO:0008270">
    <property type="term" value="F:zinc ion binding"/>
    <property type="evidence" value="ECO:0007669"/>
    <property type="project" value="InterPro"/>
</dbReference>
<dbReference type="GO" id="GO:0051301">
    <property type="term" value="P:cell division"/>
    <property type="evidence" value="ECO:0007669"/>
    <property type="project" value="TreeGrafter"/>
</dbReference>
<dbReference type="GO" id="GO:0051603">
    <property type="term" value="P:proteolysis involved in protein catabolic process"/>
    <property type="evidence" value="ECO:0007669"/>
    <property type="project" value="TreeGrafter"/>
</dbReference>
<dbReference type="CDD" id="cd19497">
    <property type="entry name" value="RecA-like_ClpX"/>
    <property type="match status" value="1"/>
</dbReference>
<dbReference type="FunFam" id="1.10.8.60:FF:000002">
    <property type="entry name" value="ATP-dependent Clp protease ATP-binding subunit ClpX"/>
    <property type="match status" value="1"/>
</dbReference>
<dbReference type="FunFam" id="3.40.50.300:FF:000005">
    <property type="entry name" value="ATP-dependent Clp protease ATP-binding subunit ClpX"/>
    <property type="match status" value="1"/>
</dbReference>
<dbReference type="Gene3D" id="1.10.8.60">
    <property type="match status" value="1"/>
</dbReference>
<dbReference type="Gene3D" id="6.20.220.10">
    <property type="entry name" value="ClpX chaperone, C4-type zinc finger domain"/>
    <property type="match status" value="1"/>
</dbReference>
<dbReference type="Gene3D" id="3.40.50.300">
    <property type="entry name" value="P-loop containing nucleotide triphosphate hydrolases"/>
    <property type="match status" value="1"/>
</dbReference>
<dbReference type="HAMAP" id="MF_00175">
    <property type="entry name" value="ClpX"/>
    <property type="match status" value="1"/>
</dbReference>
<dbReference type="InterPro" id="IPR003593">
    <property type="entry name" value="AAA+_ATPase"/>
</dbReference>
<dbReference type="InterPro" id="IPR050052">
    <property type="entry name" value="ATP-dep_Clp_protease_ClpX"/>
</dbReference>
<dbReference type="InterPro" id="IPR003959">
    <property type="entry name" value="ATPase_AAA_core"/>
</dbReference>
<dbReference type="InterPro" id="IPR019489">
    <property type="entry name" value="Clp_ATPase_C"/>
</dbReference>
<dbReference type="InterPro" id="IPR004487">
    <property type="entry name" value="Clp_protease_ATP-bd_su_ClpX"/>
</dbReference>
<dbReference type="InterPro" id="IPR046425">
    <property type="entry name" value="ClpX_bact"/>
</dbReference>
<dbReference type="InterPro" id="IPR027417">
    <property type="entry name" value="P-loop_NTPase"/>
</dbReference>
<dbReference type="InterPro" id="IPR010603">
    <property type="entry name" value="Znf_CppX_C4"/>
</dbReference>
<dbReference type="InterPro" id="IPR038366">
    <property type="entry name" value="Znf_CppX_C4_sf"/>
</dbReference>
<dbReference type="NCBIfam" id="TIGR00382">
    <property type="entry name" value="clpX"/>
    <property type="match status" value="1"/>
</dbReference>
<dbReference type="NCBIfam" id="NF003745">
    <property type="entry name" value="PRK05342.1"/>
    <property type="match status" value="1"/>
</dbReference>
<dbReference type="PANTHER" id="PTHR48102:SF7">
    <property type="entry name" value="ATP-DEPENDENT CLP PROTEASE ATP-BINDING SUBUNIT CLPX-LIKE, MITOCHONDRIAL"/>
    <property type="match status" value="1"/>
</dbReference>
<dbReference type="PANTHER" id="PTHR48102">
    <property type="entry name" value="ATP-DEPENDENT CLP PROTEASE ATP-BINDING SUBUNIT CLPX-LIKE, MITOCHONDRIAL-RELATED"/>
    <property type="match status" value="1"/>
</dbReference>
<dbReference type="Pfam" id="PF07724">
    <property type="entry name" value="AAA_2"/>
    <property type="match status" value="1"/>
</dbReference>
<dbReference type="Pfam" id="PF10431">
    <property type="entry name" value="ClpB_D2-small"/>
    <property type="match status" value="1"/>
</dbReference>
<dbReference type="Pfam" id="PF06689">
    <property type="entry name" value="zf-C4_ClpX"/>
    <property type="match status" value="1"/>
</dbReference>
<dbReference type="SMART" id="SM00382">
    <property type="entry name" value="AAA"/>
    <property type="match status" value="1"/>
</dbReference>
<dbReference type="SMART" id="SM01086">
    <property type="entry name" value="ClpB_D2-small"/>
    <property type="match status" value="1"/>
</dbReference>
<dbReference type="SMART" id="SM00994">
    <property type="entry name" value="zf-C4_ClpX"/>
    <property type="match status" value="1"/>
</dbReference>
<dbReference type="SUPFAM" id="SSF57716">
    <property type="entry name" value="Glucocorticoid receptor-like (DNA-binding domain)"/>
    <property type="match status" value="1"/>
</dbReference>
<dbReference type="SUPFAM" id="SSF52540">
    <property type="entry name" value="P-loop containing nucleoside triphosphate hydrolases"/>
    <property type="match status" value="1"/>
</dbReference>
<dbReference type="PROSITE" id="PS51902">
    <property type="entry name" value="CLPX_ZB"/>
    <property type="match status" value="1"/>
</dbReference>
<keyword id="KW-0067">ATP-binding</keyword>
<keyword id="KW-0143">Chaperone</keyword>
<keyword id="KW-0479">Metal-binding</keyword>
<keyword id="KW-0547">Nucleotide-binding</keyword>
<keyword id="KW-0862">Zinc</keyword>